<comment type="function">
    <text evidence="2">Hormone involved in the regulation of erythrocyte proliferation and differentiation and the maintenance of a physiological level of circulating erythrocyte mass. Binds to EPOR leading to EPOR dimerization and JAK2 activation thereby activating specific downstream effectors, including STAT1 and STAT3.</text>
</comment>
<comment type="subcellular location">
    <subcellularLocation>
        <location evidence="1">Secreted</location>
    </subcellularLocation>
</comment>
<comment type="tissue specificity">
    <text>Produced by kidney or liver of adult mammals and by liver of fetal or neonatal mammals.</text>
</comment>
<comment type="similarity">
    <text evidence="4">Belongs to the EPO/TPO family.</text>
</comment>
<proteinExistence type="evidence at transcript level"/>
<accession>Q0Z956</accession>
<feature type="signal peptide" evidence="3">
    <location>
        <begin position="1"/>
        <end position="26"/>
    </location>
</feature>
<feature type="chain" id="PRO_0000313663" description="Erythropoietin">
    <location>
        <begin position="27"/>
        <end position="192"/>
    </location>
</feature>
<feature type="glycosylation site" description="N-linked (GlcNAc...) asparagine" evidence="3">
    <location>
        <position position="50"/>
    </location>
</feature>
<feature type="glycosylation site" description="N-linked (GlcNAc...) asparagine" evidence="3">
    <location>
        <position position="64"/>
    </location>
</feature>
<feature type="glycosylation site" description="N-linked (GlcNAc...) asparagine" evidence="3">
    <location>
        <position position="109"/>
    </location>
</feature>
<feature type="disulfide bond" evidence="1">
    <location>
        <begin position="33"/>
        <end position="187"/>
    </location>
</feature>
<name>EPO_ALEOE</name>
<evidence type="ECO:0000250" key="1"/>
<evidence type="ECO:0000250" key="2">
    <source>
        <dbReference type="UniProtKB" id="P01588"/>
    </source>
</evidence>
<evidence type="ECO:0000255" key="3"/>
<evidence type="ECO:0000305" key="4"/>
<keyword id="KW-1015">Disulfide bond</keyword>
<keyword id="KW-0265">Erythrocyte maturation</keyword>
<keyword id="KW-0325">Glycoprotein</keyword>
<keyword id="KW-0372">Hormone</keyword>
<keyword id="KW-0964">Secreted</keyword>
<keyword id="KW-0732">Signal</keyword>
<reference key="1">
    <citation type="submission" date="2006-05" db="EMBL/GenBank/DDBJ databases">
        <title>Cloning of erythropoietin cDNA from root vole (Microtus oeconomus).</title>
        <authorList>
            <person name="Wang Y."/>
            <person name="Chen X.-Q."/>
            <person name="Du J.-Z."/>
        </authorList>
    </citation>
    <scope>NUCLEOTIDE SEQUENCE [MRNA]</scope>
    <source>
        <tissue>Kidney</tissue>
    </source>
</reference>
<organism>
    <name type="scientific">Alexandromys oeconomus</name>
    <name type="common">Tundra vole</name>
    <name type="synonym">Microtus oeconomus</name>
    <dbReference type="NCBI Taxonomy" id="2162900"/>
    <lineage>
        <taxon>Eukaryota</taxon>
        <taxon>Metazoa</taxon>
        <taxon>Chordata</taxon>
        <taxon>Craniata</taxon>
        <taxon>Vertebrata</taxon>
        <taxon>Euteleostomi</taxon>
        <taxon>Mammalia</taxon>
        <taxon>Eutheria</taxon>
        <taxon>Euarchontoglires</taxon>
        <taxon>Glires</taxon>
        <taxon>Rodentia</taxon>
        <taxon>Myomorpha</taxon>
        <taxon>Muroidea</taxon>
        <taxon>Cricetidae</taxon>
        <taxon>Arvicolinae</taxon>
        <taxon>Alexandromys</taxon>
    </lineage>
</organism>
<protein>
    <recommendedName>
        <fullName>Erythropoietin</fullName>
    </recommendedName>
</protein>
<dbReference type="EMBL" id="DQ658370">
    <property type="protein sequence ID" value="ABG47336.1"/>
    <property type="molecule type" value="mRNA"/>
</dbReference>
<dbReference type="SMR" id="Q0Z956"/>
<dbReference type="GlyCosmos" id="Q0Z956">
    <property type="glycosylation" value="3 sites, No reported glycans"/>
</dbReference>
<dbReference type="GO" id="GO:0005615">
    <property type="term" value="C:extracellular space"/>
    <property type="evidence" value="ECO:0007669"/>
    <property type="project" value="TreeGrafter"/>
</dbReference>
<dbReference type="GO" id="GO:0005125">
    <property type="term" value="F:cytokine activity"/>
    <property type="evidence" value="ECO:0007669"/>
    <property type="project" value="TreeGrafter"/>
</dbReference>
<dbReference type="GO" id="GO:0005128">
    <property type="term" value="F:erythropoietin receptor binding"/>
    <property type="evidence" value="ECO:0007669"/>
    <property type="project" value="InterPro"/>
</dbReference>
<dbReference type="GO" id="GO:0005179">
    <property type="term" value="F:hormone activity"/>
    <property type="evidence" value="ECO:0007669"/>
    <property type="project" value="UniProtKB-KW"/>
</dbReference>
<dbReference type="GO" id="GO:0030295">
    <property type="term" value="F:protein kinase activator activity"/>
    <property type="evidence" value="ECO:0007669"/>
    <property type="project" value="TreeGrafter"/>
</dbReference>
<dbReference type="GO" id="GO:0043249">
    <property type="term" value="P:erythrocyte maturation"/>
    <property type="evidence" value="ECO:0007669"/>
    <property type="project" value="UniProtKB-KW"/>
</dbReference>
<dbReference type="GO" id="GO:0038162">
    <property type="term" value="P:erythropoietin-mediated signaling pathway"/>
    <property type="evidence" value="ECO:0007669"/>
    <property type="project" value="TreeGrafter"/>
</dbReference>
<dbReference type="GO" id="GO:0008284">
    <property type="term" value="P:positive regulation of cell population proliferation"/>
    <property type="evidence" value="ECO:0007669"/>
    <property type="project" value="TreeGrafter"/>
</dbReference>
<dbReference type="GO" id="GO:0046579">
    <property type="term" value="P:positive regulation of Ras protein signal transduction"/>
    <property type="evidence" value="ECO:0007669"/>
    <property type="project" value="TreeGrafter"/>
</dbReference>
<dbReference type="FunFam" id="1.20.1250.10:FF:000013">
    <property type="entry name" value="Erythropoietin"/>
    <property type="match status" value="1"/>
</dbReference>
<dbReference type="Gene3D" id="1.20.1250.10">
    <property type="match status" value="1"/>
</dbReference>
<dbReference type="InterPro" id="IPR009079">
    <property type="entry name" value="4_helix_cytokine-like_core"/>
</dbReference>
<dbReference type="InterPro" id="IPR019767">
    <property type="entry name" value="EPO/TPO_CS"/>
</dbReference>
<dbReference type="InterPro" id="IPR001323">
    <property type="entry name" value="EPO_TPO"/>
</dbReference>
<dbReference type="InterPro" id="IPR003013">
    <property type="entry name" value="Erythroptn"/>
</dbReference>
<dbReference type="PANTHER" id="PTHR10370">
    <property type="entry name" value="ERYTHROPOIETIN"/>
    <property type="match status" value="1"/>
</dbReference>
<dbReference type="PANTHER" id="PTHR10370:SF0">
    <property type="entry name" value="ERYTHROPOIETIN"/>
    <property type="match status" value="1"/>
</dbReference>
<dbReference type="Pfam" id="PF00758">
    <property type="entry name" value="EPO_TPO"/>
    <property type="match status" value="1"/>
</dbReference>
<dbReference type="PIRSF" id="PIRSF001951">
    <property type="entry name" value="EPO"/>
    <property type="match status" value="1"/>
</dbReference>
<dbReference type="PRINTS" id="PR00272">
    <property type="entry name" value="ERYTHROPTN"/>
</dbReference>
<dbReference type="SUPFAM" id="SSF47266">
    <property type="entry name" value="4-helical cytokines"/>
    <property type="match status" value="1"/>
</dbReference>
<dbReference type="PROSITE" id="PS00817">
    <property type="entry name" value="EPO_TPO"/>
    <property type="match status" value="1"/>
</dbReference>
<gene>
    <name type="primary">EPO</name>
</gene>
<sequence length="192" mass="21232">MGVPERPTLLLLLSLLLLPLGLPVLCAPPRLICDGRVLERYILEAREAENVTMGCAEGPRLSENITVPDTKVNFNAWKRMEVQEQAVEVWQGLSLLSEAILRGQALLANSSQPSGMLQLHIDKAISGLRSLTSLLRVLGAQKESISPPDATPPAPLRTLMVENFCKLFRVYSNFLRGKLKLYTGEACRRGDR</sequence>